<proteinExistence type="inferred from homology"/>
<comment type="function">
    <text evidence="1">Binds as a heterodimer with protein bS6 to the central domain of the 16S rRNA, where it helps stabilize the platform of the 30S subunit.</text>
</comment>
<comment type="subunit">
    <text evidence="1">Part of the 30S ribosomal subunit. Forms a tight heterodimer with protein bS6.</text>
</comment>
<comment type="similarity">
    <text evidence="1">Belongs to the bacterial ribosomal protein bS18 family.</text>
</comment>
<reference key="1">
    <citation type="journal article" date="2006" name="Proc. Natl. Acad. Sci. U.S.A.">
        <title>Burkholderia xenovorans LB400 harbors a multi-replicon, 9.73-Mbp genome shaped for versatility.</title>
        <authorList>
            <person name="Chain P.S.G."/>
            <person name="Denef V.J."/>
            <person name="Konstantinidis K.T."/>
            <person name="Vergez L.M."/>
            <person name="Agullo L."/>
            <person name="Reyes V.L."/>
            <person name="Hauser L."/>
            <person name="Cordova M."/>
            <person name="Gomez L."/>
            <person name="Gonzalez M."/>
            <person name="Land M."/>
            <person name="Lao V."/>
            <person name="Larimer F."/>
            <person name="LiPuma J.J."/>
            <person name="Mahenthiralingam E."/>
            <person name="Malfatti S.A."/>
            <person name="Marx C.J."/>
            <person name="Parnell J.J."/>
            <person name="Ramette A."/>
            <person name="Richardson P."/>
            <person name="Seeger M."/>
            <person name="Smith D."/>
            <person name="Spilker T."/>
            <person name="Sul W.J."/>
            <person name="Tsoi T.V."/>
            <person name="Ulrich L.E."/>
            <person name="Zhulin I.B."/>
            <person name="Tiedje J.M."/>
        </authorList>
    </citation>
    <scope>NUCLEOTIDE SEQUENCE [LARGE SCALE GENOMIC DNA]</scope>
    <source>
        <strain>LB400</strain>
    </source>
</reference>
<sequence length="91" mass="10648">MPRPTGKKFDKRRQQQNPLFKRKKFCRFTAAGVDHIDYKDLETLKDFIGENGKITPARLTGTKSHYQRQLDTAIKRARFLALVPYTDQHKA</sequence>
<name>RS18_PARXL</name>
<gene>
    <name evidence="1" type="primary">rpsR</name>
    <name type="ordered locus">Bxeno_A1981</name>
    <name type="ORF">Bxe_A2454</name>
</gene>
<accession>Q13ZH0</accession>
<protein>
    <recommendedName>
        <fullName evidence="1">Small ribosomal subunit protein bS18</fullName>
    </recommendedName>
    <alternativeName>
        <fullName evidence="2">30S ribosomal protein S18</fullName>
    </alternativeName>
</protein>
<evidence type="ECO:0000255" key="1">
    <source>
        <dbReference type="HAMAP-Rule" id="MF_00270"/>
    </source>
</evidence>
<evidence type="ECO:0000305" key="2"/>
<dbReference type="EMBL" id="CP000270">
    <property type="protein sequence ID" value="ABE30519.1"/>
    <property type="molecule type" value="Genomic_DNA"/>
</dbReference>
<dbReference type="RefSeq" id="WP_007182109.1">
    <property type="nucleotide sequence ID" value="NZ_CP008760.1"/>
</dbReference>
<dbReference type="SMR" id="Q13ZH0"/>
<dbReference type="STRING" id="266265.Bxe_A2454"/>
<dbReference type="GeneID" id="97305419"/>
<dbReference type="KEGG" id="bxb:DR64_146"/>
<dbReference type="KEGG" id="bxe:Bxe_A2454"/>
<dbReference type="eggNOG" id="COG0238">
    <property type="taxonomic scope" value="Bacteria"/>
</dbReference>
<dbReference type="OrthoDB" id="9812008at2"/>
<dbReference type="Proteomes" id="UP000001817">
    <property type="component" value="Chromosome 1"/>
</dbReference>
<dbReference type="GO" id="GO:0022627">
    <property type="term" value="C:cytosolic small ribosomal subunit"/>
    <property type="evidence" value="ECO:0007669"/>
    <property type="project" value="TreeGrafter"/>
</dbReference>
<dbReference type="GO" id="GO:0070181">
    <property type="term" value="F:small ribosomal subunit rRNA binding"/>
    <property type="evidence" value="ECO:0007669"/>
    <property type="project" value="TreeGrafter"/>
</dbReference>
<dbReference type="GO" id="GO:0003735">
    <property type="term" value="F:structural constituent of ribosome"/>
    <property type="evidence" value="ECO:0007669"/>
    <property type="project" value="InterPro"/>
</dbReference>
<dbReference type="GO" id="GO:0006412">
    <property type="term" value="P:translation"/>
    <property type="evidence" value="ECO:0007669"/>
    <property type="project" value="UniProtKB-UniRule"/>
</dbReference>
<dbReference type="Gene3D" id="4.10.640.10">
    <property type="entry name" value="Ribosomal protein S18"/>
    <property type="match status" value="1"/>
</dbReference>
<dbReference type="HAMAP" id="MF_00270">
    <property type="entry name" value="Ribosomal_bS18"/>
    <property type="match status" value="1"/>
</dbReference>
<dbReference type="InterPro" id="IPR001648">
    <property type="entry name" value="Ribosomal_bS18"/>
</dbReference>
<dbReference type="InterPro" id="IPR018275">
    <property type="entry name" value="Ribosomal_bS18_CS"/>
</dbReference>
<dbReference type="InterPro" id="IPR036870">
    <property type="entry name" value="Ribosomal_bS18_sf"/>
</dbReference>
<dbReference type="NCBIfam" id="TIGR00165">
    <property type="entry name" value="S18"/>
    <property type="match status" value="1"/>
</dbReference>
<dbReference type="PANTHER" id="PTHR13479">
    <property type="entry name" value="30S RIBOSOMAL PROTEIN S18"/>
    <property type="match status" value="1"/>
</dbReference>
<dbReference type="PANTHER" id="PTHR13479:SF40">
    <property type="entry name" value="SMALL RIBOSOMAL SUBUNIT PROTEIN BS18M"/>
    <property type="match status" value="1"/>
</dbReference>
<dbReference type="Pfam" id="PF01084">
    <property type="entry name" value="Ribosomal_S18"/>
    <property type="match status" value="1"/>
</dbReference>
<dbReference type="PRINTS" id="PR00974">
    <property type="entry name" value="RIBOSOMALS18"/>
</dbReference>
<dbReference type="SUPFAM" id="SSF46911">
    <property type="entry name" value="Ribosomal protein S18"/>
    <property type="match status" value="1"/>
</dbReference>
<dbReference type="PROSITE" id="PS00057">
    <property type="entry name" value="RIBOSOMAL_S18"/>
    <property type="match status" value="1"/>
</dbReference>
<feature type="chain" id="PRO_1000003469" description="Small ribosomal subunit protein bS18">
    <location>
        <begin position="1"/>
        <end position="91"/>
    </location>
</feature>
<keyword id="KW-1185">Reference proteome</keyword>
<keyword id="KW-0687">Ribonucleoprotein</keyword>
<keyword id="KW-0689">Ribosomal protein</keyword>
<keyword id="KW-0694">RNA-binding</keyword>
<keyword id="KW-0699">rRNA-binding</keyword>
<organism>
    <name type="scientific">Paraburkholderia xenovorans (strain LB400)</name>
    <dbReference type="NCBI Taxonomy" id="266265"/>
    <lineage>
        <taxon>Bacteria</taxon>
        <taxon>Pseudomonadati</taxon>
        <taxon>Pseudomonadota</taxon>
        <taxon>Betaproteobacteria</taxon>
        <taxon>Burkholderiales</taxon>
        <taxon>Burkholderiaceae</taxon>
        <taxon>Paraburkholderia</taxon>
    </lineage>
</organism>